<evidence type="ECO:0000305" key="1"/>
<proteinExistence type="inferred from homology"/>
<dbReference type="EC" id="2.7.2.2"/>
<dbReference type="EMBL" id="CP000255">
    <property type="protein sequence ID" value="ABD21772.1"/>
    <property type="molecule type" value="Genomic_DNA"/>
</dbReference>
<dbReference type="SMR" id="Q2FDM7"/>
<dbReference type="KEGG" id="saa:SAUSA300_2567"/>
<dbReference type="HOGENOM" id="CLU_076278_0_0_9"/>
<dbReference type="UniPathway" id="UPA00996">
    <property type="reaction ID" value="UER00366"/>
</dbReference>
<dbReference type="Proteomes" id="UP000001939">
    <property type="component" value="Chromosome"/>
</dbReference>
<dbReference type="GO" id="GO:0005829">
    <property type="term" value="C:cytosol"/>
    <property type="evidence" value="ECO:0007669"/>
    <property type="project" value="TreeGrafter"/>
</dbReference>
<dbReference type="GO" id="GO:0005524">
    <property type="term" value="F:ATP binding"/>
    <property type="evidence" value="ECO:0007669"/>
    <property type="project" value="UniProtKB-KW"/>
</dbReference>
<dbReference type="GO" id="GO:0008804">
    <property type="term" value="F:carbamate kinase activity"/>
    <property type="evidence" value="ECO:0007669"/>
    <property type="project" value="UniProtKB-EC"/>
</dbReference>
<dbReference type="GO" id="GO:0019546">
    <property type="term" value="P:arginine deiminase pathway"/>
    <property type="evidence" value="ECO:0007669"/>
    <property type="project" value="TreeGrafter"/>
</dbReference>
<dbReference type="CDD" id="cd04235">
    <property type="entry name" value="AAK_CK"/>
    <property type="match status" value="1"/>
</dbReference>
<dbReference type="FunFam" id="3.40.1160.10:FF:000007">
    <property type="entry name" value="Carbamate kinase"/>
    <property type="match status" value="1"/>
</dbReference>
<dbReference type="Gene3D" id="3.40.1160.10">
    <property type="entry name" value="Acetylglutamate kinase-like"/>
    <property type="match status" value="1"/>
</dbReference>
<dbReference type="InterPro" id="IPR036393">
    <property type="entry name" value="AceGlu_kinase-like_sf"/>
</dbReference>
<dbReference type="InterPro" id="IPR001048">
    <property type="entry name" value="Asp/Glu/Uridylate_kinase"/>
</dbReference>
<dbReference type="InterPro" id="IPR003964">
    <property type="entry name" value="Carb_kinase"/>
</dbReference>
<dbReference type="NCBIfam" id="TIGR00746">
    <property type="entry name" value="arcC"/>
    <property type="match status" value="1"/>
</dbReference>
<dbReference type="NCBIfam" id="NF009007">
    <property type="entry name" value="PRK12352.1"/>
    <property type="match status" value="1"/>
</dbReference>
<dbReference type="PANTHER" id="PTHR30409">
    <property type="entry name" value="CARBAMATE KINASE"/>
    <property type="match status" value="1"/>
</dbReference>
<dbReference type="PANTHER" id="PTHR30409:SF1">
    <property type="entry name" value="CARBAMATE KINASE-RELATED"/>
    <property type="match status" value="1"/>
</dbReference>
<dbReference type="Pfam" id="PF00696">
    <property type="entry name" value="AA_kinase"/>
    <property type="match status" value="1"/>
</dbReference>
<dbReference type="PIRSF" id="PIRSF000723">
    <property type="entry name" value="Carbamate_kin"/>
    <property type="match status" value="1"/>
</dbReference>
<dbReference type="PRINTS" id="PR01469">
    <property type="entry name" value="CARBMTKINASE"/>
</dbReference>
<dbReference type="SUPFAM" id="SSF53633">
    <property type="entry name" value="Carbamate kinase-like"/>
    <property type="match status" value="1"/>
</dbReference>
<reference key="1">
    <citation type="journal article" date="2006" name="Lancet">
        <title>Complete genome sequence of USA300, an epidemic clone of community-acquired meticillin-resistant Staphylococcus aureus.</title>
        <authorList>
            <person name="Diep B.A."/>
            <person name="Gill S.R."/>
            <person name="Chang R.F."/>
            <person name="Phan T.H."/>
            <person name="Chen J.H."/>
            <person name="Davidson M.G."/>
            <person name="Lin F."/>
            <person name="Lin J."/>
            <person name="Carleton H.A."/>
            <person name="Mongodin E.F."/>
            <person name="Sensabaugh G.F."/>
            <person name="Perdreau-Remington F."/>
        </authorList>
    </citation>
    <scope>NUCLEOTIDE SEQUENCE [LARGE SCALE GENOMIC DNA]</scope>
    <source>
        <strain>USA300</strain>
    </source>
</reference>
<organism>
    <name type="scientific">Staphylococcus aureus (strain USA300)</name>
    <dbReference type="NCBI Taxonomy" id="367830"/>
    <lineage>
        <taxon>Bacteria</taxon>
        <taxon>Bacillati</taxon>
        <taxon>Bacillota</taxon>
        <taxon>Bacilli</taxon>
        <taxon>Bacillales</taxon>
        <taxon>Staphylococcaceae</taxon>
        <taxon>Staphylococcus</taxon>
    </lineage>
</organism>
<keyword id="KW-0056">Arginine metabolism</keyword>
<keyword id="KW-0067">ATP-binding</keyword>
<keyword id="KW-0963">Cytoplasm</keyword>
<keyword id="KW-0418">Kinase</keyword>
<keyword id="KW-0547">Nucleotide-binding</keyword>
<keyword id="KW-0808">Transferase</keyword>
<accession>Q2FDM7</accession>
<sequence>MKEKIVIALGGNAIQTTEATAEAQQTAIRCAMQNLKPLFDSPARIVISHGNGPQIGSLLIQQAKSNSDTTPAMPLDTCGAMSQGMIGYWLETEINRILTEMNSDRTVGTIVTRVEVDKDDPRFDNPTKPIGPFYTKEEVEELQKEQPDSVFKEDAGRGYRKVVASPLPQSILEHQLIRTLADGKNIVIACGGGGIPVIKKENTYEGVEAVIDKDFASEKLATLIEADTLMILTNVENVFINFNEPNQQQIDDIDVATLKKYAAQGKFVEGSMLPKIEAAIRFVESGENKKVIITNLEQAYEALIGNKGTHIHM</sequence>
<protein>
    <recommendedName>
        <fullName>Carbamate kinase 2</fullName>
        <ecNumber>2.7.2.2</ecNumber>
    </recommendedName>
</protein>
<name>ARCC2_STAA3</name>
<feature type="chain" id="PRO_0000269242" description="Carbamate kinase 2">
    <location>
        <begin position="1"/>
        <end position="313"/>
    </location>
</feature>
<gene>
    <name type="primary">arcC2</name>
    <name type="ordered locus">SAUSA300_2567</name>
</gene>
<comment type="catalytic activity">
    <reaction>
        <text>hydrogencarbonate + NH4(+) + ATP = carbamoyl phosphate + ADP + H2O + H(+)</text>
        <dbReference type="Rhea" id="RHEA:10152"/>
        <dbReference type="ChEBI" id="CHEBI:15377"/>
        <dbReference type="ChEBI" id="CHEBI:15378"/>
        <dbReference type="ChEBI" id="CHEBI:17544"/>
        <dbReference type="ChEBI" id="CHEBI:28938"/>
        <dbReference type="ChEBI" id="CHEBI:30616"/>
        <dbReference type="ChEBI" id="CHEBI:58228"/>
        <dbReference type="ChEBI" id="CHEBI:456216"/>
        <dbReference type="EC" id="2.7.2.2"/>
    </reaction>
</comment>
<comment type="pathway">
    <text>Metabolic intermediate metabolism; carbamoyl phosphate degradation; CO(2) and NH(3) from carbamoyl phosphate: step 1/1.</text>
</comment>
<comment type="subcellular location">
    <subcellularLocation>
        <location evidence="1">Cytoplasm</location>
    </subcellularLocation>
</comment>
<comment type="similarity">
    <text evidence="1">Belongs to the carbamate kinase family.</text>
</comment>